<sequence length="483" mass="54729">MKHYVAVDIGASSGRLILGKLVDEKLQLEEIHRFKNGFTYRDGHERWEIDQLMQEIFIGLEKVKQLGISECVLGIDTWGVDYVLIGASGEKLADPISYRDKRTLNAVQNLTSEYPREYIYKKTGIQFMELNTLYQLYVEERDLLERAEKILLIPDYIGYVLTGVKVAETTNSSTTQMLNLREQLFDKDLLSHLNIDVEKFAPLTDAGTYLGKVKEEWLEKYDIPNCDVVTVATHDTASAVVGTPAEGENWAFLSSGTWSLIGMELSAPINNEAAFKENYTNEWGAYGTYRFLKNIMGLWIVQEIARMDDYKHSFAEMAEEASNYPYFKQIINVNDARFNNPENMVDEIKLYCQETGQTIPETIGELTNCVYGSLALYYALELEKMTEITGKKIEKLYIVGGGSNVAMLNQLTAKLAGIEVFAGPSEATAIGNLVVQMINQGEIESMRAGRKIIRNSFEIGEFSCGDVRFEEIKERFTKVLEFN</sequence>
<protein>
    <recommendedName>
        <fullName evidence="1">Rhamnulokinase</fullName>
        <shortName evidence="1">RhaB</shortName>
        <ecNumber evidence="1">2.7.1.5</ecNumber>
    </recommendedName>
    <alternativeName>
        <fullName evidence="1">ATP:L-rhamnulose phosphotransferase</fullName>
    </alternativeName>
    <alternativeName>
        <fullName evidence="1">L-rhamnulose 1-kinase</fullName>
    </alternativeName>
    <alternativeName>
        <fullName evidence="1">Rhamnulose kinase</fullName>
    </alternativeName>
</protein>
<gene>
    <name evidence="1" type="primary">rhaB</name>
    <name type="ordered locus">LMOf2365_2839</name>
</gene>
<accession>Q71VR3</accession>
<keyword id="KW-0067">ATP-binding</keyword>
<keyword id="KW-1015">Disulfide bond</keyword>
<keyword id="KW-0418">Kinase</keyword>
<keyword id="KW-0460">Magnesium</keyword>
<keyword id="KW-0547">Nucleotide-binding</keyword>
<keyword id="KW-0684">Rhamnose metabolism</keyword>
<keyword id="KW-0808">Transferase</keyword>
<feature type="chain" id="PRO_0000090538" description="Rhamnulokinase">
    <location>
        <begin position="1"/>
        <end position="483"/>
    </location>
</feature>
<feature type="active site" description="Proton acceptor" evidence="1">
    <location>
        <position position="235"/>
    </location>
</feature>
<feature type="binding site" evidence="1">
    <location>
        <begin position="11"/>
        <end position="15"/>
    </location>
    <ligand>
        <name>ATP</name>
        <dbReference type="ChEBI" id="CHEBI:30616"/>
    </ligand>
</feature>
<feature type="binding site" evidence="1">
    <location>
        <position position="79"/>
    </location>
    <ligand>
        <name>substrate</name>
    </ligand>
</feature>
<feature type="binding site" evidence="1">
    <location>
        <begin position="234"/>
        <end position="236"/>
    </location>
    <ligand>
        <name>substrate</name>
    </ligand>
</feature>
<feature type="binding site" evidence="1">
    <location>
        <position position="257"/>
    </location>
    <ligand>
        <name>ATP</name>
        <dbReference type="ChEBI" id="CHEBI:30616"/>
    </ligand>
</feature>
<feature type="binding site" evidence="1">
    <location>
        <position position="294"/>
    </location>
    <ligand>
        <name>substrate</name>
    </ligand>
</feature>
<feature type="binding site" evidence="1">
    <location>
        <position position="302"/>
    </location>
    <ligand>
        <name>ATP</name>
        <dbReference type="ChEBI" id="CHEBI:30616"/>
    </ligand>
</feature>
<feature type="binding site" evidence="1">
    <location>
        <position position="401"/>
    </location>
    <ligand>
        <name>ATP</name>
        <dbReference type="ChEBI" id="CHEBI:30616"/>
    </ligand>
</feature>
<feature type="disulfide bond" evidence="1">
    <location>
        <begin position="352"/>
        <end position="369"/>
    </location>
</feature>
<reference key="1">
    <citation type="journal article" date="2004" name="Nucleic Acids Res.">
        <title>Whole genome comparisons of serotype 4b and 1/2a strains of the food-borne pathogen Listeria monocytogenes reveal new insights into the core genome components of this species.</title>
        <authorList>
            <person name="Nelson K.E."/>
            <person name="Fouts D.E."/>
            <person name="Mongodin E.F."/>
            <person name="Ravel J."/>
            <person name="DeBoy R.T."/>
            <person name="Kolonay J.F."/>
            <person name="Rasko D.A."/>
            <person name="Angiuoli S.V."/>
            <person name="Gill S.R."/>
            <person name="Paulsen I.T."/>
            <person name="Peterson J.D."/>
            <person name="White O."/>
            <person name="Nelson W.C."/>
            <person name="Nierman W.C."/>
            <person name="Beanan M.J."/>
            <person name="Brinkac L.M."/>
            <person name="Daugherty S.C."/>
            <person name="Dodson R.J."/>
            <person name="Durkin A.S."/>
            <person name="Madupu R."/>
            <person name="Haft D.H."/>
            <person name="Selengut J."/>
            <person name="Van Aken S.E."/>
            <person name="Khouri H.M."/>
            <person name="Fedorova N."/>
            <person name="Forberger H.A."/>
            <person name="Tran B."/>
            <person name="Kathariou S."/>
            <person name="Wonderling L.D."/>
            <person name="Uhlich G.A."/>
            <person name="Bayles D.O."/>
            <person name="Luchansky J.B."/>
            <person name="Fraser C.M."/>
        </authorList>
    </citation>
    <scope>NUCLEOTIDE SEQUENCE [LARGE SCALE GENOMIC DNA]</scope>
    <source>
        <strain>F2365</strain>
    </source>
</reference>
<evidence type="ECO:0000255" key="1">
    <source>
        <dbReference type="HAMAP-Rule" id="MF_01535"/>
    </source>
</evidence>
<proteinExistence type="inferred from homology"/>
<name>RHAB_LISMF</name>
<comment type="function">
    <text evidence="1">Involved in the catabolism of L-rhamnose (6-deoxy-L-mannose). Catalyzes the transfer of the gamma-phosphate group from ATP to the 1-hydroxyl group of L-rhamnulose to yield L-rhamnulose 1-phosphate.</text>
</comment>
<comment type="catalytic activity">
    <reaction evidence="1">
        <text>L-rhamnulose + ATP = L-rhamnulose 1-phosphate + ADP + H(+)</text>
        <dbReference type="Rhea" id="RHEA:20117"/>
        <dbReference type="ChEBI" id="CHEBI:15378"/>
        <dbReference type="ChEBI" id="CHEBI:17897"/>
        <dbReference type="ChEBI" id="CHEBI:30616"/>
        <dbReference type="ChEBI" id="CHEBI:58313"/>
        <dbReference type="ChEBI" id="CHEBI:456216"/>
        <dbReference type="EC" id="2.7.1.5"/>
    </reaction>
</comment>
<comment type="cofactor">
    <cofactor evidence="1">
        <name>Mg(2+)</name>
        <dbReference type="ChEBI" id="CHEBI:18420"/>
    </cofactor>
</comment>
<comment type="pathway">
    <text evidence="1">Carbohydrate degradation; L-rhamnose degradation; glycerone phosphate from L-rhamnose: step 2/3.</text>
</comment>
<comment type="similarity">
    <text evidence="1">Belongs to the rhamnulokinase family.</text>
</comment>
<organism>
    <name type="scientific">Listeria monocytogenes serotype 4b (strain F2365)</name>
    <dbReference type="NCBI Taxonomy" id="265669"/>
    <lineage>
        <taxon>Bacteria</taxon>
        <taxon>Bacillati</taxon>
        <taxon>Bacillota</taxon>
        <taxon>Bacilli</taxon>
        <taxon>Bacillales</taxon>
        <taxon>Listeriaceae</taxon>
        <taxon>Listeria</taxon>
    </lineage>
</organism>
<dbReference type="EC" id="2.7.1.5" evidence="1"/>
<dbReference type="EMBL" id="AE017262">
    <property type="protein sequence ID" value="AAT05603.1"/>
    <property type="molecule type" value="Genomic_DNA"/>
</dbReference>
<dbReference type="RefSeq" id="WP_009927986.1">
    <property type="nucleotide sequence ID" value="NC_002973.6"/>
</dbReference>
<dbReference type="SMR" id="Q71VR3"/>
<dbReference type="KEGG" id="lmf:LMOf2365_2839"/>
<dbReference type="HOGENOM" id="CLU_039395_0_1_9"/>
<dbReference type="UniPathway" id="UPA00541">
    <property type="reaction ID" value="UER00602"/>
</dbReference>
<dbReference type="GO" id="GO:0005829">
    <property type="term" value="C:cytosol"/>
    <property type="evidence" value="ECO:0007669"/>
    <property type="project" value="TreeGrafter"/>
</dbReference>
<dbReference type="GO" id="GO:0005524">
    <property type="term" value="F:ATP binding"/>
    <property type="evidence" value="ECO:0007669"/>
    <property type="project" value="UniProtKB-KW"/>
</dbReference>
<dbReference type="GO" id="GO:0004370">
    <property type="term" value="F:glycerol kinase activity"/>
    <property type="evidence" value="ECO:0007669"/>
    <property type="project" value="TreeGrafter"/>
</dbReference>
<dbReference type="GO" id="GO:0008993">
    <property type="term" value="F:rhamnulokinase activity"/>
    <property type="evidence" value="ECO:0007669"/>
    <property type="project" value="UniProtKB-UniRule"/>
</dbReference>
<dbReference type="GO" id="GO:0006071">
    <property type="term" value="P:glycerol metabolic process"/>
    <property type="evidence" value="ECO:0007669"/>
    <property type="project" value="TreeGrafter"/>
</dbReference>
<dbReference type="GO" id="GO:0019301">
    <property type="term" value="P:rhamnose catabolic process"/>
    <property type="evidence" value="ECO:0007669"/>
    <property type="project" value="UniProtKB-UniRule"/>
</dbReference>
<dbReference type="CDD" id="cd07771">
    <property type="entry name" value="ASKHA_NBD_FGGY_RhaB-like"/>
    <property type="match status" value="1"/>
</dbReference>
<dbReference type="FunFam" id="3.30.420.40:FF:000064">
    <property type="entry name" value="Rhamnulokinase"/>
    <property type="match status" value="1"/>
</dbReference>
<dbReference type="FunFam" id="3.30.420.40:FF:000268">
    <property type="entry name" value="Rhamnulokinase"/>
    <property type="match status" value="1"/>
</dbReference>
<dbReference type="Gene3D" id="3.30.420.40">
    <property type="match status" value="2"/>
</dbReference>
<dbReference type="HAMAP" id="MF_01535">
    <property type="entry name" value="Rhamnulokinase"/>
    <property type="match status" value="1"/>
</dbReference>
<dbReference type="InterPro" id="IPR043129">
    <property type="entry name" value="ATPase_NBD"/>
</dbReference>
<dbReference type="InterPro" id="IPR018485">
    <property type="entry name" value="FGGY_C"/>
</dbReference>
<dbReference type="InterPro" id="IPR018484">
    <property type="entry name" value="FGGY_N"/>
</dbReference>
<dbReference type="InterPro" id="IPR013449">
    <property type="entry name" value="Rhamnulokinase"/>
</dbReference>
<dbReference type="NCBIfam" id="TIGR02627">
    <property type="entry name" value="rhamnulo_kin"/>
    <property type="match status" value="1"/>
</dbReference>
<dbReference type="PANTHER" id="PTHR10196:SF93">
    <property type="entry name" value="L-RHAMNULOKINASE"/>
    <property type="match status" value="1"/>
</dbReference>
<dbReference type="PANTHER" id="PTHR10196">
    <property type="entry name" value="SUGAR KINASE"/>
    <property type="match status" value="1"/>
</dbReference>
<dbReference type="Pfam" id="PF02782">
    <property type="entry name" value="FGGY_C"/>
    <property type="match status" value="1"/>
</dbReference>
<dbReference type="Pfam" id="PF00370">
    <property type="entry name" value="FGGY_N"/>
    <property type="match status" value="1"/>
</dbReference>
<dbReference type="SUPFAM" id="SSF53067">
    <property type="entry name" value="Actin-like ATPase domain"/>
    <property type="match status" value="2"/>
</dbReference>